<accession>P9WMH2</accession>
<accession>F2GFB8</accession>
<accession>L0TDH2</accession>
<accession>O69644</accession>
<accession>Q7D534</accession>
<sequence>MDEILARAGIFQGVEPSAIAALTKQLQPVDFPRGHTVFAEGEPGDRLYIIISGKVKIGRRAPDGRENLLTIMGPSDMFGELSIFDPGPRTSSATTITEVRAVSMDRDALRSWIADRPEISEQLLRVLARRLRRTNNNLADLIFTDVPGRVAKQLLQLAQRFGTQEGGALRVTHDLTQEEIAQLVGASRETVNKALADFAHRGWIRLEGKSVLISDSERLARRAR</sequence>
<name>CRPL_MYCTO</name>
<comment type="function">
    <text evidence="4">Global transcriptional regulator that complexes with cAMP and binds to specific DNA promoter sites, causing DNA-bending, to regulate transcription. cAMP improves binding to specific DNA sequences, probably by altering protein conformation. Activates expression of whiB1.</text>
</comment>
<comment type="subunit">
    <text evidence="2">Homodimer.</text>
</comment>
<protein>
    <recommendedName>
        <fullName evidence="2">CRP-like cAMP-activated global transcriptional regulator</fullName>
    </recommendedName>
    <alternativeName>
        <fullName evidence="5">cAMP receptor protein</fullName>
        <shortName evidence="5">CRP</shortName>
    </alternativeName>
    <alternativeName>
        <fullName evidence="5">cAMP regulatory protein</fullName>
    </alternativeName>
</protein>
<gene>
    <name evidence="2" type="primary">crp</name>
    <name type="ordered locus">MT3777</name>
</gene>
<proteinExistence type="evidence at protein level"/>
<dbReference type="EMBL" id="AE000516">
    <property type="protein sequence ID" value="AAK48144.1"/>
    <property type="molecule type" value="Genomic_DNA"/>
</dbReference>
<dbReference type="PIR" id="E70790">
    <property type="entry name" value="E70790"/>
</dbReference>
<dbReference type="RefSeq" id="WP_003419728.1">
    <property type="nucleotide sequence ID" value="NZ_KK341227.1"/>
</dbReference>
<dbReference type="SMR" id="P9WMH2"/>
<dbReference type="KEGG" id="mtc:MT3777"/>
<dbReference type="PATRIC" id="fig|83331.31.peg.4067"/>
<dbReference type="HOGENOM" id="CLU_075053_3_4_11"/>
<dbReference type="Proteomes" id="UP000001020">
    <property type="component" value="Chromosome"/>
</dbReference>
<dbReference type="GO" id="GO:0005829">
    <property type="term" value="C:cytosol"/>
    <property type="evidence" value="ECO:0007669"/>
    <property type="project" value="TreeGrafter"/>
</dbReference>
<dbReference type="GO" id="GO:0030552">
    <property type="term" value="F:cAMP binding"/>
    <property type="evidence" value="ECO:0007669"/>
    <property type="project" value="UniProtKB-KW"/>
</dbReference>
<dbReference type="GO" id="GO:0003677">
    <property type="term" value="F:DNA binding"/>
    <property type="evidence" value="ECO:0007669"/>
    <property type="project" value="UniProtKB-KW"/>
</dbReference>
<dbReference type="GO" id="GO:0003700">
    <property type="term" value="F:DNA-binding transcription factor activity"/>
    <property type="evidence" value="ECO:0007669"/>
    <property type="project" value="TreeGrafter"/>
</dbReference>
<dbReference type="CDD" id="cd00038">
    <property type="entry name" value="CAP_ED"/>
    <property type="match status" value="1"/>
</dbReference>
<dbReference type="FunFam" id="1.10.10.10:FF:000019">
    <property type="entry name" value="Crp/Fnr family transcriptional regulator"/>
    <property type="match status" value="1"/>
</dbReference>
<dbReference type="FunFam" id="2.60.120.10:FF:000003">
    <property type="entry name" value="Crp/Fnr family transcriptional regulator"/>
    <property type="match status" value="1"/>
</dbReference>
<dbReference type="Gene3D" id="2.60.120.10">
    <property type="entry name" value="Jelly Rolls"/>
    <property type="match status" value="1"/>
</dbReference>
<dbReference type="Gene3D" id="1.10.10.10">
    <property type="entry name" value="Winged helix-like DNA-binding domain superfamily/Winged helix DNA-binding domain"/>
    <property type="match status" value="1"/>
</dbReference>
<dbReference type="InterPro" id="IPR000595">
    <property type="entry name" value="cNMP-bd_dom"/>
</dbReference>
<dbReference type="InterPro" id="IPR018490">
    <property type="entry name" value="cNMP-bd_dom_sf"/>
</dbReference>
<dbReference type="InterPro" id="IPR050397">
    <property type="entry name" value="Env_Response_Regulators"/>
</dbReference>
<dbReference type="InterPro" id="IPR012318">
    <property type="entry name" value="HTH_CRP"/>
</dbReference>
<dbReference type="InterPro" id="IPR014710">
    <property type="entry name" value="RmlC-like_jellyroll"/>
</dbReference>
<dbReference type="InterPro" id="IPR036388">
    <property type="entry name" value="WH-like_DNA-bd_sf"/>
</dbReference>
<dbReference type="InterPro" id="IPR036390">
    <property type="entry name" value="WH_DNA-bd_sf"/>
</dbReference>
<dbReference type="PANTHER" id="PTHR24567">
    <property type="entry name" value="CRP FAMILY TRANSCRIPTIONAL REGULATORY PROTEIN"/>
    <property type="match status" value="1"/>
</dbReference>
<dbReference type="PANTHER" id="PTHR24567:SF74">
    <property type="entry name" value="HTH-TYPE TRANSCRIPTIONAL REGULATOR ARCR"/>
    <property type="match status" value="1"/>
</dbReference>
<dbReference type="Pfam" id="PF00027">
    <property type="entry name" value="cNMP_binding"/>
    <property type="match status" value="1"/>
</dbReference>
<dbReference type="Pfam" id="PF13545">
    <property type="entry name" value="HTH_Crp_2"/>
    <property type="match status" value="1"/>
</dbReference>
<dbReference type="SMART" id="SM00100">
    <property type="entry name" value="cNMP"/>
    <property type="match status" value="1"/>
</dbReference>
<dbReference type="SMART" id="SM00419">
    <property type="entry name" value="HTH_CRP"/>
    <property type="match status" value="1"/>
</dbReference>
<dbReference type="SUPFAM" id="SSF51206">
    <property type="entry name" value="cAMP-binding domain-like"/>
    <property type="match status" value="1"/>
</dbReference>
<dbReference type="SUPFAM" id="SSF46785">
    <property type="entry name" value="Winged helix' DNA-binding domain"/>
    <property type="match status" value="1"/>
</dbReference>
<dbReference type="PROSITE" id="PS50042">
    <property type="entry name" value="CNMP_BINDING_3"/>
    <property type="match status" value="1"/>
</dbReference>
<dbReference type="PROSITE" id="PS51063">
    <property type="entry name" value="HTH_CRP_2"/>
    <property type="match status" value="1"/>
</dbReference>
<feature type="chain" id="PRO_0000427304" description="CRP-like cAMP-activated global transcriptional regulator">
    <location>
        <begin position="1"/>
        <end position="224"/>
    </location>
</feature>
<feature type="domain" description="HTH crp-type" evidence="3">
    <location>
        <begin position="144"/>
        <end position="217"/>
    </location>
</feature>
<feature type="DNA-binding region" description="H-T-H motif" evidence="3">
    <location>
        <begin position="177"/>
        <end position="196"/>
    </location>
</feature>
<feature type="binding site" evidence="1">
    <location>
        <begin position="64"/>
        <end position="70"/>
    </location>
    <ligand>
        <name>3',5'-cyclic AMP</name>
        <dbReference type="ChEBI" id="CHEBI:58165"/>
        <label>1</label>
    </ligand>
</feature>
<feature type="binding site" evidence="2">
    <location>
        <begin position="79"/>
        <end position="82"/>
    </location>
    <ligand>
        <name>3',5'-cyclic AMP</name>
        <dbReference type="ChEBI" id="CHEBI:58165"/>
        <label>1</label>
    </ligand>
</feature>
<feature type="binding site" evidence="2">
    <location>
        <begin position="89"/>
        <end position="90"/>
    </location>
    <ligand>
        <name>3',5'-cyclic AMP</name>
        <dbReference type="ChEBI" id="CHEBI:58165"/>
        <label>1</label>
    </ligand>
</feature>
<feature type="binding site" evidence="2">
    <location>
        <begin position="134"/>
        <end position="135"/>
    </location>
    <ligand>
        <name>3',5'-cyclic AMP</name>
        <dbReference type="ChEBI" id="CHEBI:58165"/>
        <label>1</label>
    </ligand>
</feature>
<feature type="binding site" evidence="1">
    <location>
        <begin position="142"/>
        <end position="143"/>
    </location>
    <ligand>
        <name>3',5'-cyclic AMP</name>
        <dbReference type="ChEBI" id="CHEBI:58165"/>
        <label>2</label>
    </ligand>
</feature>
<feature type="binding site" evidence="1">
    <location>
        <begin position="178"/>
        <end position="188"/>
    </location>
    <ligand>
        <name>3',5'-cyclic AMP</name>
        <dbReference type="ChEBI" id="CHEBI:58165"/>
        <label>2</label>
    </ligand>
</feature>
<keyword id="KW-0010">Activator</keyword>
<keyword id="KW-0114">cAMP</keyword>
<keyword id="KW-0116">cAMP-binding</keyword>
<keyword id="KW-0238">DNA-binding</keyword>
<keyword id="KW-0547">Nucleotide-binding</keyword>
<keyword id="KW-1185">Reference proteome</keyword>
<keyword id="KW-0678">Repressor</keyword>
<keyword id="KW-0804">Transcription</keyword>
<keyword id="KW-0805">Transcription regulation</keyword>
<keyword id="KW-0843">Virulence</keyword>
<organism>
    <name type="scientific">Mycobacterium tuberculosis (strain CDC 1551 / Oshkosh)</name>
    <dbReference type="NCBI Taxonomy" id="83331"/>
    <lineage>
        <taxon>Bacteria</taxon>
        <taxon>Bacillati</taxon>
        <taxon>Actinomycetota</taxon>
        <taxon>Actinomycetes</taxon>
        <taxon>Mycobacteriales</taxon>
        <taxon>Mycobacteriaceae</taxon>
        <taxon>Mycobacterium</taxon>
        <taxon>Mycobacterium tuberculosis complex</taxon>
    </lineage>
</organism>
<evidence type="ECO:0000250" key="1">
    <source>
        <dbReference type="UniProtKB" id="P0ACJ8"/>
    </source>
</evidence>
<evidence type="ECO:0000250" key="2">
    <source>
        <dbReference type="UniProtKB" id="P9WMH3"/>
    </source>
</evidence>
<evidence type="ECO:0000255" key="3">
    <source>
        <dbReference type="PROSITE-ProRule" id="PRU00387"/>
    </source>
</evidence>
<evidence type="ECO:0000269" key="4">
    <source>
    </source>
</evidence>
<evidence type="ECO:0000303" key="5">
    <source>
    </source>
</evidence>
<reference key="1">
    <citation type="journal article" date="2002" name="J. Bacteriol.">
        <title>Whole-genome comparison of Mycobacterium tuberculosis clinical and laboratory strains.</title>
        <authorList>
            <person name="Fleischmann R.D."/>
            <person name="Alland D."/>
            <person name="Eisen J.A."/>
            <person name="Carpenter L."/>
            <person name="White O."/>
            <person name="Peterson J.D."/>
            <person name="DeBoy R.T."/>
            <person name="Dodson R.J."/>
            <person name="Gwinn M.L."/>
            <person name="Haft D.H."/>
            <person name="Hickey E.K."/>
            <person name="Kolonay J.F."/>
            <person name="Nelson W.C."/>
            <person name="Umayam L.A."/>
            <person name="Ermolaeva M.D."/>
            <person name="Salzberg S.L."/>
            <person name="Delcher A."/>
            <person name="Utterback T.R."/>
            <person name="Weidman J.F."/>
            <person name="Khouri H.M."/>
            <person name="Gill J."/>
            <person name="Mikula A."/>
            <person name="Bishai W."/>
            <person name="Jacobs W.R. Jr."/>
            <person name="Venter J.C."/>
            <person name="Fraser C.M."/>
        </authorList>
    </citation>
    <scope>NUCLEOTIDE SEQUENCE [LARGE SCALE GENOMIC DNA]</scope>
    <source>
        <strain>CDC 1551 / Oshkosh</strain>
    </source>
</reference>
<reference key="2">
    <citation type="journal article" date="2006" name="Microbiology">
        <title>Regulation of the expression of whiB1 in Mycobacterium tuberculosis: role of cAMP receptor protein.</title>
        <authorList>
            <person name="Agarwal N."/>
            <person name="Raghunand T.R."/>
            <person name="Bishai W.R."/>
        </authorList>
    </citation>
    <scope>FUNCTION</scope>
    <scope>DNA-BINDING</scope>
    <source>
        <strain>CDC 1551 / Oshkosh</strain>
    </source>
</reference>